<feature type="chain" id="PRO_1000015064" description="Small ribosomal subunit protein uS10">
    <location>
        <begin position="1"/>
        <end position="101"/>
    </location>
</feature>
<name>RS10_MYCTA</name>
<reference key="1">
    <citation type="journal article" date="2008" name="PLoS ONE">
        <title>Genetic basis of virulence attenuation revealed by comparative genomic analysis of Mycobacterium tuberculosis strain H37Ra versus H37Rv.</title>
        <authorList>
            <person name="Zheng H."/>
            <person name="Lu L."/>
            <person name="Wang B."/>
            <person name="Pu S."/>
            <person name="Zhang X."/>
            <person name="Zhu G."/>
            <person name="Shi W."/>
            <person name="Zhang L."/>
            <person name="Wang H."/>
            <person name="Wang S."/>
            <person name="Zhao G."/>
            <person name="Zhang Y."/>
        </authorList>
    </citation>
    <scope>NUCLEOTIDE SEQUENCE [LARGE SCALE GENOMIC DNA]</scope>
    <source>
        <strain>ATCC 25177 / H37Ra</strain>
    </source>
</reference>
<comment type="function">
    <text evidence="1">Involved in the binding of tRNA to the ribosomes.</text>
</comment>
<comment type="subunit">
    <text evidence="1">Part of the 30S ribosomal subunit.</text>
</comment>
<comment type="similarity">
    <text evidence="1">Belongs to the universal ribosomal protein uS10 family.</text>
</comment>
<gene>
    <name evidence="1" type="primary">rpsJ</name>
    <name type="ordered locus">MRA_0708</name>
</gene>
<protein>
    <recommendedName>
        <fullName evidence="1">Small ribosomal subunit protein uS10</fullName>
    </recommendedName>
    <alternativeName>
        <fullName evidence="2">30S ribosomal protein S10</fullName>
    </alternativeName>
</protein>
<organism>
    <name type="scientific">Mycobacterium tuberculosis (strain ATCC 25177 / H37Ra)</name>
    <dbReference type="NCBI Taxonomy" id="419947"/>
    <lineage>
        <taxon>Bacteria</taxon>
        <taxon>Bacillati</taxon>
        <taxon>Actinomycetota</taxon>
        <taxon>Actinomycetes</taxon>
        <taxon>Mycobacteriales</taxon>
        <taxon>Mycobacteriaceae</taxon>
        <taxon>Mycobacterium</taxon>
        <taxon>Mycobacterium tuberculosis complex</taxon>
    </lineage>
</organism>
<sequence length="101" mass="11431">MAGQKIRIRLKAYDHEAIDASARKIVETVVRTGASVVGPVPLPTEKNVYCVIRSPHKYKDSREHFEMRTHKRLIDIIDPTPKTVDALMRIDLPASVDVNIQ</sequence>
<evidence type="ECO:0000255" key="1">
    <source>
        <dbReference type="HAMAP-Rule" id="MF_00508"/>
    </source>
</evidence>
<evidence type="ECO:0000305" key="2"/>
<proteinExistence type="inferred from homology"/>
<dbReference type="EMBL" id="CP000611">
    <property type="protein sequence ID" value="ABQ72436.1"/>
    <property type="molecule type" value="Genomic_DNA"/>
</dbReference>
<dbReference type="RefSeq" id="WP_003403578.1">
    <property type="nucleotide sequence ID" value="NZ_CP016972.1"/>
</dbReference>
<dbReference type="SMR" id="A5U086"/>
<dbReference type="GeneID" id="93438601"/>
<dbReference type="KEGG" id="mra:MRA_0708"/>
<dbReference type="eggNOG" id="COG0051">
    <property type="taxonomic scope" value="Bacteria"/>
</dbReference>
<dbReference type="HOGENOM" id="CLU_122625_1_3_11"/>
<dbReference type="Proteomes" id="UP000001988">
    <property type="component" value="Chromosome"/>
</dbReference>
<dbReference type="GO" id="GO:1990904">
    <property type="term" value="C:ribonucleoprotein complex"/>
    <property type="evidence" value="ECO:0007669"/>
    <property type="project" value="UniProtKB-KW"/>
</dbReference>
<dbReference type="GO" id="GO:0005840">
    <property type="term" value="C:ribosome"/>
    <property type="evidence" value="ECO:0007669"/>
    <property type="project" value="UniProtKB-KW"/>
</dbReference>
<dbReference type="GO" id="GO:0003735">
    <property type="term" value="F:structural constituent of ribosome"/>
    <property type="evidence" value="ECO:0007669"/>
    <property type="project" value="InterPro"/>
</dbReference>
<dbReference type="GO" id="GO:0000049">
    <property type="term" value="F:tRNA binding"/>
    <property type="evidence" value="ECO:0007669"/>
    <property type="project" value="UniProtKB-UniRule"/>
</dbReference>
<dbReference type="GO" id="GO:0006412">
    <property type="term" value="P:translation"/>
    <property type="evidence" value="ECO:0007669"/>
    <property type="project" value="UniProtKB-UniRule"/>
</dbReference>
<dbReference type="FunFam" id="3.30.70.600:FF:000001">
    <property type="entry name" value="30S ribosomal protein S10"/>
    <property type="match status" value="1"/>
</dbReference>
<dbReference type="Gene3D" id="3.30.70.600">
    <property type="entry name" value="Ribosomal protein S10 domain"/>
    <property type="match status" value="1"/>
</dbReference>
<dbReference type="HAMAP" id="MF_00508">
    <property type="entry name" value="Ribosomal_uS10"/>
    <property type="match status" value="1"/>
</dbReference>
<dbReference type="InterPro" id="IPR001848">
    <property type="entry name" value="Ribosomal_uS10"/>
</dbReference>
<dbReference type="InterPro" id="IPR018268">
    <property type="entry name" value="Ribosomal_uS10_CS"/>
</dbReference>
<dbReference type="InterPro" id="IPR027486">
    <property type="entry name" value="Ribosomal_uS10_dom"/>
</dbReference>
<dbReference type="InterPro" id="IPR036838">
    <property type="entry name" value="Ribosomal_uS10_dom_sf"/>
</dbReference>
<dbReference type="NCBIfam" id="NF001861">
    <property type="entry name" value="PRK00596.1"/>
    <property type="match status" value="1"/>
</dbReference>
<dbReference type="NCBIfam" id="TIGR01049">
    <property type="entry name" value="rpsJ_bact"/>
    <property type="match status" value="1"/>
</dbReference>
<dbReference type="PANTHER" id="PTHR11700">
    <property type="entry name" value="30S RIBOSOMAL PROTEIN S10 FAMILY MEMBER"/>
    <property type="match status" value="1"/>
</dbReference>
<dbReference type="Pfam" id="PF00338">
    <property type="entry name" value="Ribosomal_S10"/>
    <property type="match status" value="1"/>
</dbReference>
<dbReference type="PRINTS" id="PR00971">
    <property type="entry name" value="RIBOSOMALS10"/>
</dbReference>
<dbReference type="SMART" id="SM01403">
    <property type="entry name" value="Ribosomal_S10"/>
    <property type="match status" value="1"/>
</dbReference>
<dbReference type="SUPFAM" id="SSF54999">
    <property type="entry name" value="Ribosomal protein S10"/>
    <property type="match status" value="1"/>
</dbReference>
<dbReference type="PROSITE" id="PS00361">
    <property type="entry name" value="RIBOSOMAL_S10"/>
    <property type="match status" value="1"/>
</dbReference>
<keyword id="KW-1185">Reference proteome</keyword>
<keyword id="KW-0687">Ribonucleoprotein</keyword>
<keyword id="KW-0689">Ribosomal protein</keyword>
<accession>A5U086</accession>